<keyword id="KW-0143">Chaperone</keyword>
<keyword id="KW-0963">Cytoplasm</keyword>
<keyword id="KW-0342">GTP-binding</keyword>
<keyword id="KW-0996">Nickel insertion</keyword>
<keyword id="KW-0547">Nucleotide-binding</keyword>
<reference key="1">
    <citation type="journal article" date="2009" name="Genome Biol.">
        <title>Genomic and genetic analyses of diversity and plant interactions of Pseudomonas fluorescens.</title>
        <authorList>
            <person name="Silby M.W."/>
            <person name="Cerdeno-Tarraga A.M."/>
            <person name="Vernikos G.S."/>
            <person name="Giddens S.R."/>
            <person name="Jackson R.W."/>
            <person name="Preston G.M."/>
            <person name="Zhang X.-X."/>
            <person name="Moon C.D."/>
            <person name="Gehrig S.M."/>
            <person name="Godfrey S.A.C."/>
            <person name="Knight C.G."/>
            <person name="Malone J.G."/>
            <person name="Robinson Z."/>
            <person name="Spiers A.J."/>
            <person name="Harris S."/>
            <person name="Challis G.L."/>
            <person name="Yaxley A.M."/>
            <person name="Harris D."/>
            <person name="Seeger K."/>
            <person name="Murphy L."/>
            <person name="Rutter S."/>
            <person name="Squares R."/>
            <person name="Quail M.A."/>
            <person name="Saunders E."/>
            <person name="Mavromatis K."/>
            <person name="Brettin T.S."/>
            <person name="Bentley S.D."/>
            <person name="Hothersall J."/>
            <person name="Stephens E."/>
            <person name="Thomas C.M."/>
            <person name="Parkhill J."/>
            <person name="Levy S.B."/>
            <person name="Rainey P.B."/>
            <person name="Thomson N.R."/>
        </authorList>
    </citation>
    <scope>NUCLEOTIDE SEQUENCE [LARGE SCALE GENOMIC DNA]</scope>
    <source>
        <strain>SBW25</strain>
    </source>
</reference>
<gene>
    <name evidence="1" type="primary">ureG</name>
    <name type="ordered locus">PFLU_0561</name>
</gene>
<evidence type="ECO:0000255" key="1">
    <source>
        <dbReference type="HAMAP-Rule" id="MF_01389"/>
    </source>
</evidence>
<protein>
    <recommendedName>
        <fullName evidence="1">Urease accessory protein UreG</fullName>
    </recommendedName>
</protein>
<proteinExistence type="inferred from homology"/>
<feature type="chain" id="PRO_1000215139" description="Urease accessory protein UreG">
    <location>
        <begin position="1"/>
        <end position="204"/>
    </location>
</feature>
<feature type="binding site" evidence="1">
    <location>
        <begin position="12"/>
        <end position="19"/>
    </location>
    <ligand>
        <name>GTP</name>
        <dbReference type="ChEBI" id="CHEBI:37565"/>
    </ligand>
</feature>
<sequence length="204" mass="21832">MNTQPLRVGIGGPVGSGKTALTLALCLALRDRYNLAVVTNDIYTREDADFLVRNQALAPERIIGVETGGCPHTAIREDASINLEAVDQLNRRFPGLDLILVESGGDNLSATFSPELSDLTIYVIDVSAGDKLPRKGGPGICKSDLLVINKIDLAPLVGASLELMNSDTQRMRNGKPFVFSNQKTGVGLEEIVAFIERQGLLTAA</sequence>
<comment type="function">
    <text evidence="1">Facilitates the functional incorporation of the urease nickel metallocenter. This process requires GTP hydrolysis, probably effectuated by UreG.</text>
</comment>
<comment type="subunit">
    <text evidence="1">Homodimer. UreD, UreF and UreG form a complex that acts as a GTP-hydrolysis-dependent molecular chaperone, activating the urease apoprotein by helping to assemble the nickel containing metallocenter of UreC. The UreE protein probably delivers the nickel.</text>
</comment>
<comment type="subcellular location">
    <subcellularLocation>
        <location evidence="1">Cytoplasm</location>
    </subcellularLocation>
</comment>
<comment type="similarity">
    <text evidence="1">Belongs to the SIMIBI class G3E GTPase family. UreG subfamily.</text>
</comment>
<dbReference type="EMBL" id="AM181176">
    <property type="protein sequence ID" value="CAY46832.1"/>
    <property type="molecule type" value="Genomic_DNA"/>
</dbReference>
<dbReference type="RefSeq" id="WP_012721947.1">
    <property type="nucleotide sequence ID" value="NC_012660.1"/>
</dbReference>
<dbReference type="SMR" id="C3K4L3"/>
<dbReference type="STRING" id="294.SRM1_00626"/>
<dbReference type="GeneID" id="93462160"/>
<dbReference type="eggNOG" id="COG0378">
    <property type="taxonomic scope" value="Bacteria"/>
</dbReference>
<dbReference type="HOGENOM" id="CLU_072144_1_0_6"/>
<dbReference type="OrthoDB" id="9802035at2"/>
<dbReference type="GO" id="GO:0005737">
    <property type="term" value="C:cytoplasm"/>
    <property type="evidence" value="ECO:0007669"/>
    <property type="project" value="UniProtKB-SubCell"/>
</dbReference>
<dbReference type="GO" id="GO:0005525">
    <property type="term" value="F:GTP binding"/>
    <property type="evidence" value="ECO:0007669"/>
    <property type="project" value="UniProtKB-KW"/>
</dbReference>
<dbReference type="GO" id="GO:0003924">
    <property type="term" value="F:GTPase activity"/>
    <property type="evidence" value="ECO:0007669"/>
    <property type="project" value="InterPro"/>
</dbReference>
<dbReference type="GO" id="GO:0016151">
    <property type="term" value="F:nickel cation binding"/>
    <property type="evidence" value="ECO:0007669"/>
    <property type="project" value="UniProtKB-UniRule"/>
</dbReference>
<dbReference type="GO" id="GO:0043419">
    <property type="term" value="P:urea catabolic process"/>
    <property type="evidence" value="ECO:0007669"/>
    <property type="project" value="InterPro"/>
</dbReference>
<dbReference type="CDD" id="cd05540">
    <property type="entry name" value="UreG"/>
    <property type="match status" value="1"/>
</dbReference>
<dbReference type="FunFam" id="3.40.50.300:FF:000208">
    <property type="entry name" value="Urease accessory protein UreG"/>
    <property type="match status" value="1"/>
</dbReference>
<dbReference type="Gene3D" id="3.40.50.300">
    <property type="entry name" value="P-loop containing nucleotide triphosphate hydrolases"/>
    <property type="match status" value="1"/>
</dbReference>
<dbReference type="HAMAP" id="MF_01389">
    <property type="entry name" value="UreG"/>
    <property type="match status" value="1"/>
</dbReference>
<dbReference type="InterPro" id="IPR003495">
    <property type="entry name" value="CobW/HypB/UreG_nucleotide-bd"/>
</dbReference>
<dbReference type="InterPro" id="IPR027417">
    <property type="entry name" value="P-loop_NTPase"/>
</dbReference>
<dbReference type="InterPro" id="IPR004400">
    <property type="entry name" value="UreG"/>
</dbReference>
<dbReference type="NCBIfam" id="TIGR00101">
    <property type="entry name" value="ureG"/>
    <property type="match status" value="1"/>
</dbReference>
<dbReference type="PANTHER" id="PTHR31715">
    <property type="entry name" value="UREASE ACCESSORY PROTEIN G"/>
    <property type="match status" value="1"/>
</dbReference>
<dbReference type="PANTHER" id="PTHR31715:SF0">
    <property type="entry name" value="UREASE ACCESSORY PROTEIN G"/>
    <property type="match status" value="1"/>
</dbReference>
<dbReference type="Pfam" id="PF02492">
    <property type="entry name" value="cobW"/>
    <property type="match status" value="1"/>
</dbReference>
<dbReference type="PIRSF" id="PIRSF005624">
    <property type="entry name" value="Ni-bind_GTPase"/>
    <property type="match status" value="1"/>
</dbReference>
<dbReference type="SUPFAM" id="SSF52540">
    <property type="entry name" value="P-loop containing nucleoside triphosphate hydrolases"/>
    <property type="match status" value="1"/>
</dbReference>
<accession>C3K4L3</accession>
<name>UREG_PSEFS</name>
<organism>
    <name type="scientific">Pseudomonas fluorescens (strain SBW25)</name>
    <dbReference type="NCBI Taxonomy" id="216595"/>
    <lineage>
        <taxon>Bacteria</taxon>
        <taxon>Pseudomonadati</taxon>
        <taxon>Pseudomonadota</taxon>
        <taxon>Gammaproteobacteria</taxon>
        <taxon>Pseudomonadales</taxon>
        <taxon>Pseudomonadaceae</taxon>
        <taxon>Pseudomonas</taxon>
    </lineage>
</organism>